<name>PPS_THEKO</name>
<feature type="chain" id="PRO_0000409260" description="4-phosphopantoate--beta-alanine ligase">
    <location>
        <begin position="1"/>
        <end position="261"/>
    </location>
</feature>
<feature type="binding site" evidence="1 2">
    <location>
        <position position="17"/>
    </location>
    <ligand>
        <name>ATP</name>
        <dbReference type="ChEBI" id="CHEBI:30616"/>
    </ligand>
</feature>
<feature type="binding site" evidence="2 5 9">
    <location>
        <position position="39"/>
    </location>
    <ligand>
        <name>ATP</name>
        <dbReference type="ChEBI" id="CHEBI:30616"/>
    </ligand>
</feature>
<feature type="binding site" evidence="2 5 9">
    <location>
        <begin position="181"/>
        <end position="183"/>
    </location>
    <ligand>
        <name>ATP</name>
        <dbReference type="ChEBI" id="CHEBI:30616"/>
    </ligand>
</feature>
<feature type="binding site" evidence="2 5 9">
    <location>
        <begin position="187"/>
        <end position="188"/>
    </location>
    <ligand>
        <name>ATP</name>
        <dbReference type="ChEBI" id="CHEBI:30616"/>
    </ligand>
</feature>
<feature type="binding site" evidence="2 5 9">
    <location>
        <begin position="199"/>
        <end position="200"/>
    </location>
    <ligand>
        <name>ATP</name>
        <dbReference type="ChEBI" id="CHEBI:30616"/>
    </ligand>
</feature>
<feature type="mutagenesis site" description="Strong decrease in activity." evidence="5">
    <original>R</original>
    <variation>A</variation>
    <location>
        <position position="17"/>
    </location>
</feature>
<feature type="mutagenesis site" description="Strong decrease in activity." evidence="5">
    <original>Y</original>
    <variation>A</variation>
    <variation>F</variation>
    <location>
        <position position="45"/>
    </location>
</feature>
<feature type="helix" evidence="13">
    <location>
        <begin position="11"/>
        <end position="25"/>
    </location>
</feature>
<feature type="helix" evidence="13">
    <location>
        <begin position="31"/>
        <end position="47"/>
    </location>
</feature>
<feature type="helix" evidence="13">
    <location>
        <begin position="53"/>
        <end position="68"/>
    </location>
</feature>
<feature type="strand" evidence="13">
    <location>
        <begin position="73"/>
        <end position="76"/>
    </location>
</feature>
<feature type="helix" evidence="13">
    <location>
        <begin position="78"/>
        <end position="83"/>
    </location>
</feature>
<feature type="helix" evidence="13">
    <location>
        <begin position="85"/>
        <end position="95"/>
    </location>
</feature>
<feature type="strand" evidence="13">
    <location>
        <begin position="98"/>
        <end position="101"/>
    </location>
</feature>
<feature type="helix" evidence="13">
    <location>
        <begin position="108"/>
        <end position="119"/>
    </location>
</feature>
<feature type="strand" evidence="12">
    <location>
        <begin position="137"/>
        <end position="139"/>
    </location>
</feature>
<feature type="helix" evidence="13">
    <location>
        <begin position="141"/>
        <end position="143"/>
    </location>
</feature>
<feature type="turn" evidence="13">
    <location>
        <begin position="148"/>
        <end position="150"/>
    </location>
</feature>
<feature type="helix" evidence="13">
    <location>
        <begin position="151"/>
        <end position="153"/>
    </location>
</feature>
<feature type="strand" evidence="13">
    <location>
        <begin position="155"/>
        <end position="158"/>
    </location>
</feature>
<feature type="helix" evidence="13">
    <location>
        <begin position="164"/>
        <end position="172"/>
    </location>
</feature>
<feature type="strand" evidence="13">
    <location>
        <begin position="176"/>
        <end position="180"/>
    </location>
</feature>
<feature type="helix" evidence="13">
    <location>
        <begin position="187"/>
        <end position="191"/>
    </location>
</feature>
<feature type="strand" evidence="13">
    <location>
        <begin position="192"/>
        <end position="196"/>
    </location>
</feature>
<feature type="helix" evidence="13">
    <location>
        <begin position="200"/>
        <end position="213"/>
    </location>
</feature>
<feature type="turn" evidence="11">
    <location>
        <begin position="214"/>
        <end position="216"/>
    </location>
</feature>
<feature type="helix" evidence="13">
    <location>
        <begin position="219"/>
        <end position="227"/>
    </location>
</feature>
<feature type="helix" evidence="13">
    <location>
        <begin position="231"/>
        <end position="252"/>
    </location>
</feature>
<evidence type="ECO:0000250" key="1">
    <source>
        <dbReference type="UniProtKB" id="B6YXQ1"/>
    </source>
</evidence>
<evidence type="ECO:0000255" key="2">
    <source>
        <dbReference type="HAMAP-Rule" id="MF_02224"/>
    </source>
</evidence>
<evidence type="ECO:0000269" key="3">
    <source>
    </source>
</evidence>
<evidence type="ECO:0000269" key="4">
    <source>
    </source>
</evidence>
<evidence type="ECO:0000269" key="5">
    <source>
    </source>
</evidence>
<evidence type="ECO:0000303" key="6">
    <source>
    </source>
</evidence>
<evidence type="ECO:0000305" key="7"/>
<evidence type="ECO:0007744" key="8">
    <source>
        <dbReference type="PDB" id="3WDK"/>
    </source>
</evidence>
<evidence type="ECO:0007744" key="9">
    <source>
        <dbReference type="PDB" id="3WDL"/>
    </source>
</evidence>
<evidence type="ECO:0007744" key="10">
    <source>
        <dbReference type="PDB" id="3WDM"/>
    </source>
</evidence>
<evidence type="ECO:0007829" key="11">
    <source>
        <dbReference type="PDB" id="3WDK"/>
    </source>
</evidence>
<evidence type="ECO:0007829" key="12">
    <source>
        <dbReference type="PDB" id="3WDL"/>
    </source>
</evidence>
<evidence type="ECO:0007829" key="13">
    <source>
        <dbReference type="PDB" id="3WDM"/>
    </source>
</evidence>
<sequence>MVNIPKSHPRYWSLYYREKIIEGMEKGMTAKAGLIAHGRGEAFDYLIGERTIEPAERAMRAAVAKFLLAEHPVISVNGNVAALVPKETIELAKALNAKLEINLFYRTEERVRTIAEELRKYDPEIEILGINPTKRIPGLEHERGKVDENGIWKADVVLVPLEDGDRTEALVRMGKFVVTVDLNPLSRSARMADITIVDNIVRAYPRMVELAREMKDYSREELLKIVGEYDNGKTLSDVLLHIRDRLTRLAEEGIWRRKELE</sequence>
<keyword id="KW-0002">3D-structure</keyword>
<keyword id="KW-0067">ATP-binding</keyword>
<keyword id="KW-0173">Coenzyme A biosynthesis</keyword>
<keyword id="KW-0436">Ligase</keyword>
<keyword id="KW-0547">Nucleotide-binding</keyword>
<keyword id="KW-1185">Reference proteome</keyword>
<proteinExistence type="evidence at protein level"/>
<accession>Q5JIZ8</accession>
<reference key="1">
    <citation type="journal article" date="2005" name="Genome Res.">
        <title>Complete genome sequence of the hyperthermophilic archaeon Thermococcus kodakaraensis KOD1 and comparison with Pyrococcus genomes.</title>
        <authorList>
            <person name="Fukui T."/>
            <person name="Atomi H."/>
            <person name="Kanai T."/>
            <person name="Matsumi R."/>
            <person name="Fujiwara S."/>
            <person name="Imanaka T."/>
        </authorList>
    </citation>
    <scope>NUCLEOTIDE SEQUENCE [LARGE SCALE GENOMIC DNA]</scope>
    <source>
        <strain>ATCC BAA-918 / JCM 12380 / KOD1</strain>
    </source>
</reference>
<reference key="2">
    <citation type="journal article" date="2009" name="J. Biol. Chem.">
        <title>Pantoate kinase and phosphopantothenate synthetase, two novel enzymes necessary for CoA biosynthesis in the Archaea.</title>
        <authorList>
            <person name="Yokooji Y."/>
            <person name="Tomita H."/>
            <person name="Atomi H."/>
            <person name="Imanaka T."/>
        </authorList>
    </citation>
    <scope>FUNCTION</scope>
    <scope>CATALYTIC ACTIVITY</scope>
    <scope>ROLE IN COA BIOSYNTHESIS</scope>
    <scope>PATHWAY</scope>
    <scope>SUBUNIT</scope>
    <scope>DISRUPTION PHENOTYPE</scope>
    <source>
        <strain>ATCC BAA-918 / JCM 12380 / KOD1</strain>
    </source>
</reference>
<reference key="3">
    <citation type="journal article" date="2012" name="Extremophiles">
        <title>A detailed biochemical characterization of phosphopantothenate synthetase, a novel enzyme involved in coenzyme A biosynthesis in the Archaea.</title>
        <authorList>
            <person name="Ishibashi T."/>
            <person name="Tomita H."/>
            <person name="Yokooji Y."/>
            <person name="Morikita T."/>
            <person name="Watanabe B."/>
            <person name="Hiratake J."/>
            <person name="Kishimoto A."/>
            <person name="Kita A."/>
            <person name="Miki K."/>
            <person name="Imanaka T."/>
            <person name="Atomi H."/>
        </authorList>
    </citation>
    <scope>FUNCTION</scope>
    <scope>CATALYTIC ACTIVITY</scope>
    <scope>ACTIVITY REGULATION</scope>
    <scope>BIOPHYSICOCHEMICAL PROPERTIES</scope>
    <source>
        <strain>ATCC BAA-918 / JCM 12380 / KOD1</strain>
    </source>
</reference>
<reference evidence="8 9 10" key="4">
    <citation type="journal article" date="2014" name="Proteins">
        <title>Crystal structure of phosphopantothenate synthetase from Thermococcus kodakarensis.</title>
        <authorList>
            <person name="Kishimoto A."/>
            <person name="Kita A."/>
            <person name="Ishibashi T."/>
            <person name="Tomita H."/>
            <person name="Yokooji Y."/>
            <person name="Imanaka T."/>
            <person name="Atomi H."/>
            <person name="Miki K."/>
        </authorList>
    </citation>
    <scope>X-RAY CRYSTALLOGRAPHY (2.00 ANGSTROMS) IN COMPLEXES WITH ATP; REACTION INTERMEDIATE AND ADENOSINE</scope>
    <scope>FUNCTION</scope>
    <scope>CATALYTIC ACTIVITY</scope>
    <scope>REACTION MECHANISM</scope>
    <scope>SUBUNIT</scope>
    <scope>MUTAGENESIS OF ARG-17 AND TYR-45</scope>
</reference>
<dbReference type="EC" id="6.3.2.36" evidence="2 3 4 5"/>
<dbReference type="EMBL" id="AP006878">
    <property type="protein sequence ID" value="BAD85875.1"/>
    <property type="molecule type" value="Genomic_DNA"/>
</dbReference>
<dbReference type="RefSeq" id="WP_011250637.1">
    <property type="nucleotide sequence ID" value="NC_006624.1"/>
</dbReference>
<dbReference type="PDB" id="3WDK">
    <property type="method" value="X-ray"/>
    <property type="resolution" value="2.30 A"/>
    <property type="chains" value="A/B/C/D=1-261"/>
</dbReference>
<dbReference type="PDB" id="3WDL">
    <property type="method" value="X-ray"/>
    <property type="resolution" value="2.40 A"/>
    <property type="chains" value="A/B/C/D=1-261"/>
</dbReference>
<dbReference type="PDB" id="3WDM">
    <property type="method" value="X-ray"/>
    <property type="resolution" value="2.00 A"/>
    <property type="chains" value="A/B/C/D=1-261"/>
</dbReference>
<dbReference type="PDBsum" id="3WDK"/>
<dbReference type="PDBsum" id="3WDL"/>
<dbReference type="PDBsum" id="3WDM"/>
<dbReference type="SMR" id="Q5JIZ8"/>
<dbReference type="FunCoup" id="Q5JIZ8">
    <property type="interactions" value="57"/>
</dbReference>
<dbReference type="STRING" id="69014.TK1686"/>
<dbReference type="EnsemblBacteria" id="BAD85875">
    <property type="protein sequence ID" value="BAD85875"/>
    <property type="gene ID" value="TK1686"/>
</dbReference>
<dbReference type="GeneID" id="78448213"/>
<dbReference type="KEGG" id="tko:TK1686"/>
<dbReference type="PATRIC" id="fig|69014.16.peg.1643"/>
<dbReference type="eggNOG" id="arCOG04262">
    <property type="taxonomic scope" value="Archaea"/>
</dbReference>
<dbReference type="HOGENOM" id="CLU_078701_0_0_2"/>
<dbReference type="InParanoid" id="Q5JIZ8"/>
<dbReference type="OrthoDB" id="10078at2157"/>
<dbReference type="PhylomeDB" id="Q5JIZ8"/>
<dbReference type="BioCyc" id="MetaCyc:MONOMER-15971"/>
<dbReference type="BRENDA" id="6.3.2.26">
    <property type="organism ID" value="5246"/>
</dbReference>
<dbReference type="BRENDA" id="6.3.2.36">
    <property type="organism ID" value="5246"/>
</dbReference>
<dbReference type="UniPathway" id="UPA00241"/>
<dbReference type="EvolutionaryTrace" id="Q5JIZ8"/>
<dbReference type="Proteomes" id="UP000000536">
    <property type="component" value="Chromosome"/>
</dbReference>
<dbReference type="GO" id="GO:0016881">
    <property type="term" value="F:acid-amino acid ligase activity"/>
    <property type="evidence" value="ECO:0007669"/>
    <property type="project" value="UniProtKB-UniRule"/>
</dbReference>
<dbReference type="GO" id="GO:0005524">
    <property type="term" value="F:ATP binding"/>
    <property type="evidence" value="ECO:0007669"/>
    <property type="project" value="UniProtKB-KW"/>
</dbReference>
<dbReference type="GO" id="GO:0015937">
    <property type="term" value="P:coenzyme A biosynthetic process"/>
    <property type="evidence" value="ECO:0007669"/>
    <property type="project" value="UniProtKB-UniRule"/>
</dbReference>
<dbReference type="Gene3D" id="3.40.50.12640">
    <property type="entry name" value="Phosphopantoate/pantothenate synthetase"/>
    <property type="match status" value="1"/>
</dbReference>
<dbReference type="HAMAP" id="MF_02224">
    <property type="entry name" value="PPS"/>
    <property type="match status" value="1"/>
</dbReference>
<dbReference type="InterPro" id="IPR002855">
    <property type="entry name" value="PPS/PS"/>
</dbReference>
<dbReference type="InterPro" id="IPR038138">
    <property type="entry name" value="PPS/PS_sf"/>
</dbReference>
<dbReference type="NCBIfam" id="NF041123">
    <property type="entry name" value="phpantohe_syn_Arch"/>
    <property type="match status" value="1"/>
</dbReference>
<dbReference type="NCBIfam" id="NF010324">
    <property type="entry name" value="PRK13761.1"/>
    <property type="match status" value="1"/>
</dbReference>
<dbReference type="PANTHER" id="PTHR40695">
    <property type="entry name" value="4-PHOSPHOPANTOATE--BETA-ALANINE LIGASE"/>
    <property type="match status" value="1"/>
</dbReference>
<dbReference type="PANTHER" id="PTHR40695:SF1">
    <property type="entry name" value="4-PHOSPHOPANTOATE--BETA-ALANINE LIGASE"/>
    <property type="match status" value="1"/>
</dbReference>
<dbReference type="Pfam" id="PF02006">
    <property type="entry name" value="PPS_PS"/>
    <property type="match status" value="1"/>
</dbReference>
<dbReference type="PIRSF" id="PIRSF004853">
    <property type="entry name" value="UCP004853"/>
    <property type="match status" value="1"/>
</dbReference>
<comment type="function">
    <text evidence="3 4 5">Catalyzes the condensation of (R)-4-phosphopantoate and beta-alanine to 4'-phosphopantothenate in the CoA biosynthesis pathway (PubMed:19666462, PubMed:22940806, PubMed:24638914). Cannot use (R)-pantoate as substrate and thus does not display pantothenate synthetase (PS) activity (PubMed:19666462, PubMed:22940806). Displays strict specificity for its natural substrates, 4-phosphopantoate, ATP and beta-alanine (PubMed:22940806).</text>
</comment>
<comment type="catalytic activity">
    <reaction evidence="2 3 4 5">
        <text>(R)-4-phosphopantoate + beta-alanine + ATP = (R)-4'-phosphopantothenate + AMP + diphosphate + H(+)</text>
        <dbReference type="Rhea" id="RHEA:27930"/>
        <dbReference type="ChEBI" id="CHEBI:10986"/>
        <dbReference type="ChEBI" id="CHEBI:15378"/>
        <dbReference type="ChEBI" id="CHEBI:30616"/>
        <dbReference type="ChEBI" id="CHEBI:33019"/>
        <dbReference type="ChEBI" id="CHEBI:57966"/>
        <dbReference type="ChEBI" id="CHEBI:61294"/>
        <dbReference type="ChEBI" id="CHEBI:456215"/>
        <dbReference type="EC" id="6.3.2.36"/>
    </reaction>
</comment>
<comment type="activity regulation">
    <text evidence="4">Activity is not affected by 4'-phosphopantothenate or CoA/acetyl-CoA.</text>
</comment>
<comment type="biophysicochemical properties">
    <kinetics>
        <KM evidence="4">0.34 mM for beta-alanine</KM>
        <KM evidence="4">1.16 mM for 4-phosphopantoate</KM>
        <KM evidence="4">2.44 mM for ATP</KM>
        <Vmax evidence="4">6.38 umol/min/mg enzyme toward beta-alanine</Vmax>
        <Vmax evidence="4">15.6 umol/min/mg enzyme toward 4-phosphopantoate</Vmax>
        <Vmax evidence="4">14.7 umol/min/mg enzyme toward ATP</Vmax>
    </kinetics>
    <phDependence>
        <text evidence="4">Optimum pH is 6.5.</text>
    </phDependence>
    <temperatureDependence>
        <text evidence="4">Activity increases with temperature elevation from 65 degrees Celsius to 95 degrees Celsius.</text>
    </temperatureDependence>
</comment>
<comment type="pathway">
    <text evidence="2 3">Cofactor biosynthesis; coenzyme A biosynthesis.</text>
</comment>
<comment type="subunit">
    <text evidence="2 3 5">Homodimer.</text>
</comment>
<comment type="disruption phenotype">
    <text evidence="3">Only viable in the presence of CoA or 4'-phosphopantothenate.</text>
</comment>
<comment type="similarity">
    <text evidence="2 7">Belongs to the archaeal phosphopantothenate synthetase family.</text>
</comment>
<protein>
    <recommendedName>
        <fullName evidence="2 7">4-phosphopantoate--beta-alanine ligase</fullName>
        <ecNumber evidence="2 3 4 5">6.3.2.36</ecNumber>
    </recommendedName>
    <alternativeName>
        <fullName evidence="2 6">Phosphopantothenate synthetase</fullName>
        <shortName evidence="2 6">PPS</shortName>
    </alternativeName>
</protein>
<organism>
    <name type="scientific">Thermococcus kodakarensis (strain ATCC BAA-918 / JCM 12380 / KOD1)</name>
    <name type="common">Pyrococcus kodakaraensis (strain KOD1)</name>
    <dbReference type="NCBI Taxonomy" id="69014"/>
    <lineage>
        <taxon>Archaea</taxon>
        <taxon>Methanobacteriati</taxon>
        <taxon>Methanobacteriota</taxon>
        <taxon>Thermococci</taxon>
        <taxon>Thermococcales</taxon>
        <taxon>Thermococcaceae</taxon>
        <taxon>Thermococcus</taxon>
    </lineage>
</organism>
<gene>
    <name type="ordered locus">TK1686</name>
</gene>